<name>GELS_HALRO</name>
<reference key="1">
    <citation type="journal article" date="1998" name="Biochim. Biophys. Acta">
        <title>Functional characteristics and the complete primary structure of ascidian gelsolin.</title>
        <authorList>
            <person name="Ohtsuka Y."/>
            <person name="Nakae H."/>
            <person name="Abe H."/>
            <person name="Obinata T."/>
        </authorList>
    </citation>
    <scope>NUCLEOTIDE SEQUENCE [MRNA]</scope>
    <scope>CHARACTERIZATION</scope>
    <scope>FUNCTION</scope>
    <source>
        <tissue>Body wall muscle</tissue>
    </source>
</reference>
<reference key="2">
    <citation type="journal article" date="1994" name="Zool. Sci.">
        <title>Immunochemical studies of an actin-binding protein in ascidian body wall smooth muscle.</title>
        <authorList>
            <person name="Ohtsuka Y."/>
            <person name="Nakae H."/>
            <person name="Abe H."/>
            <person name="Obinata T."/>
        </authorList>
    </citation>
    <scope>IDENTIFICATION OF PROTEIN</scope>
    <source>
        <tissue>Body wall muscle</tissue>
    </source>
</reference>
<dbReference type="EMBL" id="AB009981">
    <property type="protein sequence ID" value="BAA28674.1"/>
    <property type="molecule type" value="mRNA"/>
</dbReference>
<dbReference type="SMR" id="O61270"/>
<dbReference type="GO" id="GO:0015629">
    <property type="term" value="C:actin cytoskeleton"/>
    <property type="evidence" value="ECO:0007669"/>
    <property type="project" value="TreeGrafter"/>
</dbReference>
<dbReference type="GO" id="GO:0005737">
    <property type="term" value="C:cytoplasm"/>
    <property type="evidence" value="ECO:0007669"/>
    <property type="project" value="UniProtKB-KW"/>
</dbReference>
<dbReference type="GO" id="GO:0051015">
    <property type="term" value="F:actin filament binding"/>
    <property type="evidence" value="ECO:0007669"/>
    <property type="project" value="InterPro"/>
</dbReference>
<dbReference type="GO" id="GO:0046872">
    <property type="term" value="F:metal ion binding"/>
    <property type="evidence" value="ECO:0007669"/>
    <property type="project" value="UniProtKB-KW"/>
</dbReference>
<dbReference type="GO" id="GO:0005546">
    <property type="term" value="F:phosphatidylinositol-4,5-bisphosphate binding"/>
    <property type="evidence" value="ECO:0007669"/>
    <property type="project" value="TreeGrafter"/>
</dbReference>
<dbReference type="GO" id="GO:0051014">
    <property type="term" value="P:actin filament severing"/>
    <property type="evidence" value="ECO:0007669"/>
    <property type="project" value="TreeGrafter"/>
</dbReference>
<dbReference type="GO" id="GO:0008154">
    <property type="term" value="P:actin polymerization or depolymerization"/>
    <property type="evidence" value="ECO:0007669"/>
    <property type="project" value="TreeGrafter"/>
</dbReference>
<dbReference type="GO" id="GO:0051016">
    <property type="term" value="P:barbed-end actin filament capping"/>
    <property type="evidence" value="ECO:0007669"/>
    <property type="project" value="TreeGrafter"/>
</dbReference>
<dbReference type="CDD" id="cd11290">
    <property type="entry name" value="gelsolin_S1_like"/>
    <property type="match status" value="1"/>
</dbReference>
<dbReference type="CDD" id="cd11289">
    <property type="entry name" value="gelsolin_S2_like"/>
    <property type="match status" value="1"/>
</dbReference>
<dbReference type="CDD" id="cd11292">
    <property type="entry name" value="gelsolin_S3_like"/>
    <property type="match status" value="1"/>
</dbReference>
<dbReference type="CDD" id="cd11293">
    <property type="entry name" value="gelsolin_S4_like"/>
    <property type="match status" value="1"/>
</dbReference>
<dbReference type="CDD" id="cd11288">
    <property type="entry name" value="gelsolin_S5_like"/>
    <property type="match status" value="1"/>
</dbReference>
<dbReference type="CDD" id="cd11291">
    <property type="entry name" value="gelsolin_S6_like"/>
    <property type="match status" value="1"/>
</dbReference>
<dbReference type="FunFam" id="3.40.20.10:FF:000001">
    <property type="entry name" value="Gelsolin"/>
    <property type="match status" value="1"/>
</dbReference>
<dbReference type="FunFam" id="3.40.20.10:FF:000002">
    <property type="entry name" value="Gelsolin"/>
    <property type="match status" value="1"/>
</dbReference>
<dbReference type="FunFam" id="3.40.20.10:FF:000005">
    <property type="entry name" value="Gelsolin"/>
    <property type="match status" value="1"/>
</dbReference>
<dbReference type="Gene3D" id="3.40.20.10">
    <property type="entry name" value="Severin"/>
    <property type="match status" value="6"/>
</dbReference>
<dbReference type="InterPro" id="IPR029006">
    <property type="entry name" value="ADF-H/Gelsolin-like_dom_sf"/>
</dbReference>
<dbReference type="InterPro" id="IPR007123">
    <property type="entry name" value="Gelsolin-like_dom"/>
</dbReference>
<dbReference type="InterPro" id="IPR036180">
    <property type="entry name" value="Gelsolin-like_dom_sf"/>
</dbReference>
<dbReference type="InterPro" id="IPR007122">
    <property type="entry name" value="Villin/Gelsolin"/>
</dbReference>
<dbReference type="PANTHER" id="PTHR11977:SF131">
    <property type="entry name" value="GELSOLIN-LIKE DOMAIN-CONTAINING PROTEIN"/>
    <property type="match status" value="1"/>
</dbReference>
<dbReference type="PANTHER" id="PTHR11977">
    <property type="entry name" value="VILLIN"/>
    <property type="match status" value="1"/>
</dbReference>
<dbReference type="Pfam" id="PF00626">
    <property type="entry name" value="Gelsolin"/>
    <property type="match status" value="6"/>
</dbReference>
<dbReference type="PRINTS" id="PR00597">
    <property type="entry name" value="GELSOLIN"/>
</dbReference>
<dbReference type="SMART" id="SM00262">
    <property type="entry name" value="GEL"/>
    <property type="match status" value="6"/>
</dbReference>
<dbReference type="SUPFAM" id="SSF55753">
    <property type="entry name" value="Actin depolymerizing proteins"/>
    <property type="match status" value="5"/>
</dbReference>
<dbReference type="SUPFAM" id="SSF82754">
    <property type="entry name" value="C-terminal, gelsolin-like domain of Sec23/24"/>
    <property type="match status" value="1"/>
</dbReference>
<feature type="chain" id="PRO_0000218725" description="Gelsolin, cytoplasmic">
    <location>
        <begin position="1"/>
        <end position="715"/>
    </location>
</feature>
<feature type="repeat" description="Gelsolin-like 1">
    <location>
        <begin position="24"/>
        <end position="75"/>
    </location>
</feature>
<feature type="repeat" description="Gelsolin-like 2">
    <location>
        <begin position="147"/>
        <end position="187"/>
    </location>
</feature>
<feature type="repeat" description="Gelsolin-like 3">
    <location>
        <begin position="260"/>
        <end position="306"/>
    </location>
</feature>
<feature type="repeat" description="Gelsolin-like 4">
    <location>
        <begin position="405"/>
        <end position="451"/>
    </location>
</feature>
<feature type="repeat" description="Gelsolin-like 5">
    <location>
        <begin position="524"/>
        <end position="564"/>
    </location>
</feature>
<feature type="repeat" description="Gelsolin-like 6">
    <location>
        <begin position="625"/>
        <end position="667"/>
    </location>
</feature>
<feature type="region of interest" description="Actin-severing" evidence="2">
    <location>
        <begin position="1"/>
        <end position="124"/>
    </location>
</feature>
<feature type="region of interest" description="Actin-actin interfilament contact point">
    <location>
        <begin position="72"/>
        <end position="75"/>
    </location>
</feature>
<feature type="region of interest" description="Actin-binding, Ca-sensitive" evidence="2">
    <location>
        <begin position="384"/>
        <end position="715"/>
    </location>
</feature>
<feature type="binding site">
    <location>
        <begin position="136"/>
        <end position="145"/>
    </location>
    <ligand>
        <name>a 1,2-diacyl-sn-glycero-3-phospho-(1D-myo-inositol-4,5-bisphosphate)</name>
        <dbReference type="ChEBI" id="CHEBI:58456"/>
    </ligand>
</feature>
<feature type="binding site" evidence="1">
    <location>
        <position position="421"/>
    </location>
    <ligand>
        <name>Ca(2+)</name>
        <dbReference type="ChEBI" id="CHEBI:29108"/>
        <label>1</label>
    </ligand>
</feature>
<feature type="binding site" evidence="1">
    <location>
        <position position="422"/>
    </location>
    <ligand>
        <name>Ca(2+)</name>
        <dbReference type="ChEBI" id="CHEBI:29108"/>
        <label>1</label>
    </ligand>
</feature>
<feature type="binding site" evidence="1">
    <location>
        <position position="449"/>
    </location>
    <ligand>
        <name>Ca(2+)</name>
        <dbReference type="ChEBI" id="CHEBI:29108"/>
        <label>1</label>
    </ligand>
</feature>
<feature type="binding site" evidence="1">
    <location>
        <position position="499"/>
    </location>
    <ligand>
        <name>Ca(2+)</name>
        <dbReference type="ChEBI" id="CHEBI:29108"/>
        <label>1</label>
    </ligand>
</feature>
<feature type="binding site" evidence="1">
    <location>
        <position position="539"/>
    </location>
    <ligand>
        <name>Ca(2+)</name>
        <dbReference type="ChEBI" id="CHEBI:29108"/>
        <label>2</label>
    </ligand>
</feature>
<feature type="binding site" evidence="1">
    <location>
        <position position="540"/>
    </location>
    <ligand>
        <name>Ca(2+)</name>
        <dbReference type="ChEBI" id="CHEBI:29108"/>
        <label>2</label>
    </ligand>
</feature>
<feature type="binding site" evidence="1">
    <location>
        <position position="562"/>
    </location>
    <ligand>
        <name>Ca(2+)</name>
        <dbReference type="ChEBI" id="CHEBI:29108"/>
        <label>2</label>
    </ligand>
</feature>
<feature type="binding site" evidence="1">
    <location>
        <position position="642"/>
    </location>
    <ligand>
        <name>Ca(2+)</name>
        <dbReference type="ChEBI" id="CHEBI:29108"/>
        <label>3</label>
    </ligand>
</feature>
<feature type="binding site" evidence="1">
    <location>
        <position position="665"/>
    </location>
    <ligand>
        <name>Ca(2+)</name>
        <dbReference type="ChEBI" id="CHEBI:29108"/>
        <label>3</label>
    </ligand>
</feature>
<accession>O61270</accession>
<protein>
    <recommendedName>
        <fullName>Gelsolin, cytoplasmic</fullName>
    </recommendedName>
    <alternativeName>
        <fullName>Actin-depolymerizing factor</fullName>
        <shortName>ADF</shortName>
    </alternativeName>
    <alternativeName>
        <fullName>Ascidian gelsolin</fullName>
    </alternativeName>
</protein>
<comment type="function">
    <text evidence="3">Calcium-regulated, actin-modulating protein that binds to the plus (or barbed) ends of actin monomers or filaments, preventing monomer exchange (end-blocking or capping). It can promote the assembly of monomers into filaments (nucleation) as well as sever filaments already formed.</text>
</comment>
<comment type="subcellular location">
    <subcellularLocation>
        <location>Cytoplasm</location>
        <location>Cytoskeleton</location>
    </subcellularLocation>
</comment>
<comment type="tissue specificity">
    <text>Predominantly in the body wall muscle, but expression is not restricted to muscle cells.</text>
</comment>
<comment type="induction">
    <text>Interaction with actin is suppressed by PIP2.</text>
</comment>
<comment type="similarity">
    <text evidence="4">Belongs to the villin/gelsolin family.</text>
</comment>
<evidence type="ECO:0000250" key="1"/>
<evidence type="ECO:0000255" key="2"/>
<evidence type="ECO:0000269" key="3">
    <source>
    </source>
</evidence>
<evidence type="ECO:0000305" key="4"/>
<organism>
    <name type="scientific">Halocynthia roretzi</name>
    <name type="common">Sea squirt</name>
    <name type="synonym">Cynthia roretzi</name>
    <dbReference type="NCBI Taxonomy" id="7729"/>
    <lineage>
        <taxon>Eukaryota</taxon>
        <taxon>Metazoa</taxon>
        <taxon>Chordata</taxon>
        <taxon>Tunicata</taxon>
        <taxon>Ascidiacea</taxon>
        <taxon>Stolidobranchia</taxon>
        <taxon>Pyuridae</taxon>
        <taxon>Halocynthia</taxon>
    </lineage>
</organism>
<keyword id="KW-0117">Actin capping</keyword>
<keyword id="KW-0009">Actin-binding</keyword>
<keyword id="KW-0106">Calcium</keyword>
<keyword id="KW-0963">Cytoplasm</keyword>
<keyword id="KW-0206">Cytoskeleton</keyword>
<keyword id="KW-0479">Metal-binding</keyword>
<keyword id="KW-0677">Repeat</keyword>
<proteinExistence type="evidence at protein level"/>
<sequence>MTTELEIQKAGKETGIQIWRIEDFELVPVPKTNHGKFYTGDSYIILKTTALESGRGFEWNLHYWQGKESSQDERGAVAILAVKMDDHLNGGPVEHREVQGNESAAFKGLFPTITYLIGGVASGFTHVEINEVEDRKVLTRVKGKRPVRATQVPIKWTSLTDSDSYVFDIGKEIYVWSGPKASHFEKNKAIQYADGLKNERQGRAELHHIDSLDDKESRTMLKDFFGEAFPGSIPSGESDTVQQVGTTIKLFRISDDSGTLKITLVSENSPFNQGDLSSGDTFVLANARTNHIFVWKGKDSSRTERASAANPDNSFFNKIEMPLTSKLTVLPEGGETANFKSLFTNWKSSRDQRGLGQVHSINKTAKVAKETFDASVLHSNPKKAAESKMIDDGSGKTQIWRVASLRKEPVPKELYGQFYGGDCYIIMYTPQRGANVLYYWQGNKASINERTALPIQTKNTHETECDGNASQIRVVQGTEPPHMMMLFGGKPLIVHLGDTISPTGKSKAASTRLYQVQSFFAGRCRAVEVPAKSSHLNSNDAFLLITPSGSYIWVGKGAVESEIQGAKDTAGILKISKYEIINENQEPNEFWTALGGQSDYWRDEREEGVPVEPRLFEMSNATGNFIAEEINSNYVQSDLNPDSIMMLDAWNYIYVWIGKEANQEEKMSFKSLVDNYVKTDGSGRSKDIPREVFDQGKEPLSFTGHFLGWDKTLWD</sequence>